<comment type="catalytic activity">
    <reaction evidence="1">
        <text>(2R)-3-phosphoglycerate + ATP = (2R)-3-phospho-glyceroyl phosphate + ADP</text>
        <dbReference type="Rhea" id="RHEA:14801"/>
        <dbReference type="ChEBI" id="CHEBI:30616"/>
        <dbReference type="ChEBI" id="CHEBI:57604"/>
        <dbReference type="ChEBI" id="CHEBI:58272"/>
        <dbReference type="ChEBI" id="CHEBI:456216"/>
        <dbReference type="EC" id="2.7.2.3"/>
    </reaction>
</comment>
<comment type="pathway">
    <text evidence="1">Carbohydrate degradation; glycolysis; pyruvate from D-glyceraldehyde 3-phosphate: step 2/5.</text>
</comment>
<comment type="subunit">
    <text evidence="1">Monomer.</text>
</comment>
<comment type="subcellular location">
    <subcellularLocation>
        <location evidence="1">Cytoplasm</location>
    </subcellularLocation>
</comment>
<comment type="similarity">
    <text evidence="1">Belongs to the phosphoglycerate kinase family.</text>
</comment>
<gene>
    <name evidence="1" type="primary">pgk</name>
    <name type="ordered locus">Ent638_3339</name>
</gene>
<dbReference type="EC" id="2.7.2.3" evidence="1"/>
<dbReference type="EMBL" id="CP000653">
    <property type="protein sequence ID" value="ABP62001.1"/>
    <property type="molecule type" value="Genomic_DNA"/>
</dbReference>
<dbReference type="RefSeq" id="WP_015960329.1">
    <property type="nucleotide sequence ID" value="NC_009436.1"/>
</dbReference>
<dbReference type="SMR" id="A4WE71"/>
<dbReference type="STRING" id="399742.Ent638_3339"/>
<dbReference type="KEGG" id="ent:Ent638_3339"/>
<dbReference type="eggNOG" id="COG0126">
    <property type="taxonomic scope" value="Bacteria"/>
</dbReference>
<dbReference type="HOGENOM" id="CLU_025427_0_2_6"/>
<dbReference type="OrthoDB" id="9808460at2"/>
<dbReference type="UniPathway" id="UPA00109">
    <property type="reaction ID" value="UER00185"/>
</dbReference>
<dbReference type="Proteomes" id="UP000000230">
    <property type="component" value="Chromosome"/>
</dbReference>
<dbReference type="GO" id="GO:0005829">
    <property type="term" value="C:cytosol"/>
    <property type="evidence" value="ECO:0007669"/>
    <property type="project" value="TreeGrafter"/>
</dbReference>
<dbReference type="GO" id="GO:0043531">
    <property type="term" value="F:ADP binding"/>
    <property type="evidence" value="ECO:0007669"/>
    <property type="project" value="TreeGrafter"/>
</dbReference>
<dbReference type="GO" id="GO:0005524">
    <property type="term" value="F:ATP binding"/>
    <property type="evidence" value="ECO:0007669"/>
    <property type="project" value="UniProtKB-KW"/>
</dbReference>
<dbReference type="GO" id="GO:0004618">
    <property type="term" value="F:phosphoglycerate kinase activity"/>
    <property type="evidence" value="ECO:0007669"/>
    <property type="project" value="UniProtKB-UniRule"/>
</dbReference>
<dbReference type="GO" id="GO:0006094">
    <property type="term" value="P:gluconeogenesis"/>
    <property type="evidence" value="ECO:0007669"/>
    <property type="project" value="TreeGrafter"/>
</dbReference>
<dbReference type="GO" id="GO:0006096">
    <property type="term" value="P:glycolytic process"/>
    <property type="evidence" value="ECO:0007669"/>
    <property type="project" value="UniProtKB-UniRule"/>
</dbReference>
<dbReference type="FunFam" id="3.40.50.1260:FF:000001">
    <property type="entry name" value="Phosphoglycerate kinase"/>
    <property type="match status" value="1"/>
</dbReference>
<dbReference type="FunFam" id="3.40.50.1260:FF:000002">
    <property type="entry name" value="Phosphoglycerate kinase"/>
    <property type="match status" value="1"/>
</dbReference>
<dbReference type="Gene3D" id="3.40.50.1260">
    <property type="entry name" value="Phosphoglycerate kinase, N-terminal domain"/>
    <property type="match status" value="2"/>
</dbReference>
<dbReference type="HAMAP" id="MF_00145">
    <property type="entry name" value="Phosphoglyc_kinase"/>
    <property type="match status" value="1"/>
</dbReference>
<dbReference type="InterPro" id="IPR001576">
    <property type="entry name" value="Phosphoglycerate_kinase"/>
</dbReference>
<dbReference type="InterPro" id="IPR015911">
    <property type="entry name" value="Phosphoglycerate_kinase_CS"/>
</dbReference>
<dbReference type="InterPro" id="IPR015824">
    <property type="entry name" value="Phosphoglycerate_kinase_N"/>
</dbReference>
<dbReference type="InterPro" id="IPR036043">
    <property type="entry name" value="Phosphoglycerate_kinase_sf"/>
</dbReference>
<dbReference type="PANTHER" id="PTHR11406">
    <property type="entry name" value="PHOSPHOGLYCERATE KINASE"/>
    <property type="match status" value="1"/>
</dbReference>
<dbReference type="PANTHER" id="PTHR11406:SF23">
    <property type="entry name" value="PHOSPHOGLYCERATE KINASE 1, CHLOROPLASTIC-RELATED"/>
    <property type="match status" value="1"/>
</dbReference>
<dbReference type="Pfam" id="PF00162">
    <property type="entry name" value="PGK"/>
    <property type="match status" value="1"/>
</dbReference>
<dbReference type="PIRSF" id="PIRSF000724">
    <property type="entry name" value="Pgk"/>
    <property type="match status" value="1"/>
</dbReference>
<dbReference type="PRINTS" id="PR00477">
    <property type="entry name" value="PHGLYCKINASE"/>
</dbReference>
<dbReference type="SUPFAM" id="SSF53748">
    <property type="entry name" value="Phosphoglycerate kinase"/>
    <property type="match status" value="1"/>
</dbReference>
<dbReference type="PROSITE" id="PS00111">
    <property type="entry name" value="PGLYCERATE_KINASE"/>
    <property type="match status" value="1"/>
</dbReference>
<reference key="1">
    <citation type="journal article" date="2010" name="PLoS Genet.">
        <title>Genome sequence of the plant growth promoting endophytic bacterium Enterobacter sp. 638.</title>
        <authorList>
            <person name="Taghavi S."/>
            <person name="van der Lelie D."/>
            <person name="Hoffman A."/>
            <person name="Zhang Y.B."/>
            <person name="Walla M.D."/>
            <person name="Vangronsveld J."/>
            <person name="Newman L."/>
            <person name="Monchy S."/>
        </authorList>
    </citation>
    <scope>NUCLEOTIDE SEQUENCE [LARGE SCALE GENOMIC DNA]</scope>
    <source>
        <strain>638</strain>
    </source>
</reference>
<organism>
    <name type="scientific">Enterobacter sp. (strain 638)</name>
    <dbReference type="NCBI Taxonomy" id="399742"/>
    <lineage>
        <taxon>Bacteria</taxon>
        <taxon>Pseudomonadati</taxon>
        <taxon>Pseudomonadota</taxon>
        <taxon>Gammaproteobacteria</taxon>
        <taxon>Enterobacterales</taxon>
        <taxon>Enterobacteriaceae</taxon>
        <taxon>Enterobacter</taxon>
    </lineage>
</organism>
<evidence type="ECO:0000255" key="1">
    <source>
        <dbReference type="HAMAP-Rule" id="MF_00145"/>
    </source>
</evidence>
<name>PGK_ENT38</name>
<keyword id="KW-0067">ATP-binding</keyword>
<keyword id="KW-0963">Cytoplasm</keyword>
<keyword id="KW-0324">Glycolysis</keyword>
<keyword id="KW-0418">Kinase</keyword>
<keyword id="KW-0547">Nucleotide-binding</keyword>
<keyword id="KW-0808">Transferase</keyword>
<proteinExistence type="inferred from homology"/>
<feature type="chain" id="PRO_1000057986" description="Phosphoglycerate kinase">
    <location>
        <begin position="1"/>
        <end position="387"/>
    </location>
</feature>
<feature type="binding site" evidence="1">
    <location>
        <begin position="21"/>
        <end position="23"/>
    </location>
    <ligand>
        <name>substrate</name>
    </ligand>
</feature>
<feature type="binding site" evidence="1">
    <location>
        <position position="36"/>
    </location>
    <ligand>
        <name>substrate</name>
    </ligand>
</feature>
<feature type="binding site" evidence="1">
    <location>
        <begin position="59"/>
        <end position="62"/>
    </location>
    <ligand>
        <name>substrate</name>
    </ligand>
</feature>
<feature type="binding site" evidence="1">
    <location>
        <position position="113"/>
    </location>
    <ligand>
        <name>substrate</name>
    </ligand>
</feature>
<feature type="binding site" evidence="1">
    <location>
        <position position="146"/>
    </location>
    <ligand>
        <name>substrate</name>
    </ligand>
</feature>
<feature type="binding site" evidence="1">
    <location>
        <position position="197"/>
    </location>
    <ligand>
        <name>ATP</name>
        <dbReference type="ChEBI" id="CHEBI:30616"/>
    </ligand>
</feature>
<feature type="binding site" evidence="1">
    <location>
        <position position="314"/>
    </location>
    <ligand>
        <name>ATP</name>
        <dbReference type="ChEBI" id="CHEBI:30616"/>
    </ligand>
</feature>
<feature type="binding site" evidence="1">
    <location>
        <begin position="340"/>
        <end position="343"/>
    </location>
    <ligand>
        <name>ATP</name>
        <dbReference type="ChEBI" id="CHEBI:30616"/>
    </ligand>
</feature>
<accession>A4WE71</accession>
<sequence>MSVIKMTDLDLAGKRVFIRADLNVPVKDGKVTSDARIRASLPTIELALKQGAKVMVTSHLGRPTEGEYNEEFSLLPVVNYLKDKLSNPVRLVKDYLDGVEVAEGELVVLENVRFNKGEKKDDEALSKKYAALCDVFVMDAFGTAHRAQASTHGIGKFADVACAGPLLAEELDALGKALKEPARPMVAIVGGSKVSTKLTVLDSLSKIADQLIVGGGIANTFVAAQGHNVGKSLYEADLVEEAKRLLTTCDIPVPTDVRVATEFSETATATLKSVNDIKDEEQILDLGDVSAQKLADILKNAKTILWNGPVGVFEFPNFRKGTEIVANAIADSDAFSIAGGGDTLAAIDLFGISDKISYISTGGGAFLEFVEGKVLPAVAMLEERAKK</sequence>
<protein>
    <recommendedName>
        <fullName evidence="1">Phosphoglycerate kinase</fullName>
        <ecNumber evidence="1">2.7.2.3</ecNumber>
    </recommendedName>
</protein>